<reference key="1">
    <citation type="journal article" date="2004" name="Nat. Biotechnol.">
        <title>The genome sequence of the anaerobic, sulfate-reducing bacterium Desulfovibrio vulgaris Hildenborough.</title>
        <authorList>
            <person name="Heidelberg J.F."/>
            <person name="Seshadri R."/>
            <person name="Haveman S.A."/>
            <person name="Hemme C.L."/>
            <person name="Paulsen I.T."/>
            <person name="Kolonay J.F."/>
            <person name="Eisen J.A."/>
            <person name="Ward N.L."/>
            <person name="Methe B.A."/>
            <person name="Brinkac L.M."/>
            <person name="Daugherty S.C."/>
            <person name="DeBoy R.T."/>
            <person name="Dodson R.J."/>
            <person name="Durkin A.S."/>
            <person name="Madupu R."/>
            <person name="Nelson W.C."/>
            <person name="Sullivan S.A."/>
            <person name="Fouts D.E."/>
            <person name="Haft D.H."/>
            <person name="Selengut J."/>
            <person name="Peterson J.D."/>
            <person name="Davidsen T.M."/>
            <person name="Zafar N."/>
            <person name="Zhou L."/>
            <person name="Radune D."/>
            <person name="Dimitrov G."/>
            <person name="Hance M."/>
            <person name="Tran K."/>
            <person name="Khouri H.M."/>
            <person name="Gill J."/>
            <person name="Utterback T.R."/>
            <person name="Feldblyum T.V."/>
            <person name="Wall J.D."/>
            <person name="Voordouw G."/>
            <person name="Fraser C.M."/>
        </authorList>
    </citation>
    <scope>NUCLEOTIDE SEQUENCE [LARGE SCALE GENOMIC DNA]</scope>
    <source>
        <strain>ATCC 29579 / DSM 644 / CCUG 34227 / NCIMB 8303 / VKM B-1760 / Hildenborough</strain>
    </source>
</reference>
<organism>
    <name type="scientific">Nitratidesulfovibrio vulgaris (strain ATCC 29579 / DSM 644 / CCUG 34227 / NCIMB 8303 / VKM B-1760 / Hildenborough)</name>
    <name type="common">Desulfovibrio vulgaris</name>
    <dbReference type="NCBI Taxonomy" id="882"/>
    <lineage>
        <taxon>Bacteria</taxon>
        <taxon>Pseudomonadati</taxon>
        <taxon>Thermodesulfobacteriota</taxon>
        <taxon>Desulfovibrionia</taxon>
        <taxon>Desulfovibrionales</taxon>
        <taxon>Desulfovibrionaceae</taxon>
        <taxon>Nitratidesulfovibrio</taxon>
    </lineage>
</organism>
<feature type="chain" id="PRO_0000340947" description="4-hydroxy-tetrahydrodipicolinate synthase">
    <location>
        <begin position="1"/>
        <end position="292"/>
    </location>
</feature>
<feature type="active site" description="Proton donor/acceptor" evidence="1">
    <location>
        <position position="133"/>
    </location>
</feature>
<feature type="active site" description="Schiff-base intermediate with substrate" evidence="1">
    <location>
        <position position="162"/>
    </location>
</feature>
<feature type="binding site" evidence="1">
    <location>
        <position position="45"/>
    </location>
    <ligand>
        <name>pyruvate</name>
        <dbReference type="ChEBI" id="CHEBI:15361"/>
    </ligand>
</feature>
<feature type="binding site" evidence="1">
    <location>
        <position position="204"/>
    </location>
    <ligand>
        <name>pyruvate</name>
        <dbReference type="ChEBI" id="CHEBI:15361"/>
    </ligand>
</feature>
<feature type="site" description="Part of a proton relay during catalysis" evidence="1">
    <location>
        <position position="44"/>
    </location>
</feature>
<feature type="site" description="Part of a proton relay during catalysis" evidence="1">
    <location>
        <position position="107"/>
    </location>
</feature>
<dbReference type="EC" id="4.3.3.7" evidence="1"/>
<dbReference type="EMBL" id="AE017285">
    <property type="protein sequence ID" value="AAS96344.1"/>
    <property type="molecule type" value="Genomic_DNA"/>
</dbReference>
<dbReference type="RefSeq" id="WP_010939154.1">
    <property type="nucleotide sequence ID" value="NC_002937.3"/>
</dbReference>
<dbReference type="RefSeq" id="YP_011085.1">
    <property type="nucleotide sequence ID" value="NC_002937.3"/>
</dbReference>
<dbReference type="SMR" id="Q72AX2"/>
<dbReference type="STRING" id="882.DVU_1868"/>
<dbReference type="PaxDb" id="882-DVU_1868"/>
<dbReference type="EnsemblBacteria" id="AAS96344">
    <property type="protein sequence ID" value="AAS96344"/>
    <property type="gene ID" value="DVU_1868"/>
</dbReference>
<dbReference type="KEGG" id="dvu:DVU_1868"/>
<dbReference type="PATRIC" id="fig|882.5.peg.1711"/>
<dbReference type="eggNOG" id="COG0329">
    <property type="taxonomic scope" value="Bacteria"/>
</dbReference>
<dbReference type="HOGENOM" id="CLU_049343_7_1_7"/>
<dbReference type="OrthoDB" id="9782828at2"/>
<dbReference type="PhylomeDB" id="Q72AX2"/>
<dbReference type="UniPathway" id="UPA00034">
    <property type="reaction ID" value="UER00017"/>
</dbReference>
<dbReference type="Proteomes" id="UP000002194">
    <property type="component" value="Chromosome"/>
</dbReference>
<dbReference type="GO" id="GO:0005829">
    <property type="term" value="C:cytosol"/>
    <property type="evidence" value="ECO:0007669"/>
    <property type="project" value="TreeGrafter"/>
</dbReference>
<dbReference type="GO" id="GO:0008840">
    <property type="term" value="F:4-hydroxy-tetrahydrodipicolinate synthase activity"/>
    <property type="evidence" value="ECO:0007669"/>
    <property type="project" value="UniProtKB-UniRule"/>
</dbReference>
<dbReference type="GO" id="GO:0019877">
    <property type="term" value="P:diaminopimelate biosynthetic process"/>
    <property type="evidence" value="ECO:0007669"/>
    <property type="project" value="UniProtKB-UniRule"/>
</dbReference>
<dbReference type="GO" id="GO:0009089">
    <property type="term" value="P:lysine biosynthetic process via diaminopimelate"/>
    <property type="evidence" value="ECO:0007669"/>
    <property type="project" value="UniProtKB-UniRule"/>
</dbReference>
<dbReference type="CDD" id="cd00950">
    <property type="entry name" value="DHDPS"/>
    <property type="match status" value="1"/>
</dbReference>
<dbReference type="Gene3D" id="3.20.20.70">
    <property type="entry name" value="Aldolase class I"/>
    <property type="match status" value="1"/>
</dbReference>
<dbReference type="HAMAP" id="MF_00418">
    <property type="entry name" value="DapA"/>
    <property type="match status" value="1"/>
</dbReference>
<dbReference type="InterPro" id="IPR013785">
    <property type="entry name" value="Aldolase_TIM"/>
</dbReference>
<dbReference type="InterPro" id="IPR005263">
    <property type="entry name" value="DapA"/>
</dbReference>
<dbReference type="InterPro" id="IPR002220">
    <property type="entry name" value="DapA-like"/>
</dbReference>
<dbReference type="InterPro" id="IPR020625">
    <property type="entry name" value="Schiff_base-form_aldolases_AS"/>
</dbReference>
<dbReference type="InterPro" id="IPR020624">
    <property type="entry name" value="Schiff_base-form_aldolases_CS"/>
</dbReference>
<dbReference type="NCBIfam" id="TIGR00674">
    <property type="entry name" value="dapA"/>
    <property type="match status" value="1"/>
</dbReference>
<dbReference type="PANTHER" id="PTHR12128:SF66">
    <property type="entry name" value="4-HYDROXY-2-OXOGLUTARATE ALDOLASE, MITOCHONDRIAL"/>
    <property type="match status" value="1"/>
</dbReference>
<dbReference type="PANTHER" id="PTHR12128">
    <property type="entry name" value="DIHYDRODIPICOLINATE SYNTHASE"/>
    <property type="match status" value="1"/>
</dbReference>
<dbReference type="Pfam" id="PF00701">
    <property type="entry name" value="DHDPS"/>
    <property type="match status" value="1"/>
</dbReference>
<dbReference type="PIRSF" id="PIRSF001365">
    <property type="entry name" value="DHDPS"/>
    <property type="match status" value="1"/>
</dbReference>
<dbReference type="PRINTS" id="PR00146">
    <property type="entry name" value="DHPICSNTHASE"/>
</dbReference>
<dbReference type="SMART" id="SM01130">
    <property type="entry name" value="DHDPS"/>
    <property type="match status" value="1"/>
</dbReference>
<dbReference type="SUPFAM" id="SSF51569">
    <property type="entry name" value="Aldolase"/>
    <property type="match status" value="1"/>
</dbReference>
<dbReference type="PROSITE" id="PS00665">
    <property type="entry name" value="DHDPS_1"/>
    <property type="match status" value="1"/>
</dbReference>
<dbReference type="PROSITE" id="PS00666">
    <property type="entry name" value="DHDPS_2"/>
    <property type="match status" value="1"/>
</dbReference>
<comment type="function">
    <text evidence="1">Catalyzes the condensation of (S)-aspartate-beta-semialdehyde [(S)-ASA] and pyruvate to 4-hydroxy-tetrahydrodipicolinate (HTPA).</text>
</comment>
<comment type="catalytic activity">
    <reaction evidence="1">
        <text>L-aspartate 4-semialdehyde + pyruvate = (2S,4S)-4-hydroxy-2,3,4,5-tetrahydrodipicolinate + H2O + H(+)</text>
        <dbReference type="Rhea" id="RHEA:34171"/>
        <dbReference type="ChEBI" id="CHEBI:15361"/>
        <dbReference type="ChEBI" id="CHEBI:15377"/>
        <dbReference type="ChEBI" id="CHEBI:15378"/>
        <dbReference type="ChEBI" id="CHEBI:67139"/>
        <dbReference type="ChEBI" id="CHEBI:537519"/>
        <dbReference type="EC" id="4.3.3.7"/>
    </reaction>
</comment>
<comment type="pathway">
    <text evidence="1">Amino-acid biosynthesis; L-lysine biosynthesis via DAP pathway; (S)-tetrahydrodipicolinate from L-aspartate: step 3/4.</text>
</comment>
<comment type="subunit">
    <text evidence="1">Homotetramer; dimer of dimers.</text>
</comment>
<comment type="subcellular location">
    <subcellularLocation>
        <location evidence="1">Cytoplasm</location>
    </subcellularLocation>
</comment>
<comment type="similarity">
    <text evidence="1">Belongs to the DapA family.</text>
</comment>
<comment type="caution">
    <text evidence="2">Was originally thought to be a dihydrodipicolinate synthase (DHDPS), catalyzing the condensation of (S)-aspartate-beta-semialdehyde [(S)-ASA] and pyruvate to dihydrodipicolinate (DHDP). However, it was shown in E.coli that the product of the enzymatic reaction is not dihydrodipicolinate but in fact (4S)-4-hydroxy-2,3,4,5-tetrahydro-(2S)-dipicolinic acid (HTPA), and that the consecutive dehydration reaction leading to DHDP is not spontaneous but catalyzed by DapB.</text>
</comment>
<sequence>MQFTGAFTAIVTPFRNGRVDEERFRELIEWQIEQGINGLVPCGTTGESATLSHDEHRDVIRICVEQVKGRIPVLAGAGSNNTREAIDLTRFAKEAGADGALLITPYYNKPTQEGLYLHFKAIASEVSMPFIVYNVPSRTGTNICPETLARLNRDIPEVVGVKEATGNLIQVSEILEYCGTDFQVLSGDDFTVLPLLSVGGCGVISVTSNVVPAKMSDMCRAFKAGDLATARRLHFELSPINRAMFLETNPIPVKTALALMGRIDLEMRLPLCPLQQVNQSRLRDILAAAGIL</sequence>
<keyword id="KW-0028">Amino-acid biosynthesis</keyword>
<keyword id="KW-0963">Cytoplasm</keyword>
<keyword id="KW-0220">Diaminopimelate biosynthesis</keyword>
<keyword id="KW-0456">Lyase</keyword>
<keyword id="KW-0457">Lysine biosynthesis</keyword>
<keyword id="KW-1185">Reference proteome</keyword>
<keyword id="KW-0704">Schiff base</keyword>
<protein>
    <recommendedName>
        <fullName evidence="1">4-hydroxy-tetrahydrodipicolinate synthase</fullName>
        <shortName evidence="1">HTPA synthase</shortName>
        <ecNumber evidence="1">4.3.3.7</ecNumber>
    </recommendedName>
</protein>
<evidence type="ECO:0000255" key="1">
    <source>
        <dbReference type="HAMAP-Rule" id="MF_00418"/>
    </source>
</evidence>
<evidence type="ECO:0000305" key="2"/>
<accession>Q72AX2</accession>
<name>DAPA_NITV2</name>
<proteinExistence type="inferred from homology"/>
<gene>
    <name evidence="1" type="primary">dapA</name>
    <name type="ordered locus">DVU_1868</name>
</gene>